<feature type="chain" id="PRO_0000412618" description="Uncharacterized protein VACWR003">
    <location>
        <begin position="1"/>
        <end position="72"/>
    </location>
</feature>
<proteinExistence type="predicted"/>
<reference key="1">
    <citation type="submission" date="2003-02" db="EMBL/GenBank/DDBJ databases">
        <title>Sequencing of the coding region of Vaccinia-WR to an average 9-fold redundancy and an error rate of 0.16/10kb.</title>
        <authorList>
            <person name="Esposito J.J."/>
            <person name="Frace A.M."/>
            <person name="Sammons S.A."/>
            <person name="Olsen-Rasmussen M."/>
            <person name="Osborne J."/>
            <person name="Wohlhueter R."/>
        </authorList>
    </citation>
    <scope>NUCLEOTIDE SEQUENCE [LARGE SCALE GENOMIC DNA]</scope>
</reference>
<protein>
    <recommendedName>
        <fullName>Uncharacterized protein VACWR003</fullName>
    </recommendedName>
</protein>
<organism>
    <name type="scientific">Vaccinia virus (strain Western Reserve)</name>
    <name type="common">VACV</name>
    <name type="synonym">Vaccinia virus (strain WR)</name>
    <dbReference type="NCBI Taxonomy" id="10254"/>
    <lineage>
        <taxon>Viruses</taxon>
        <taxon>Varidnaviria</taxon>
        <taxon>Bamfordvirae</taxon>
        <taxon>Nucleocytoviricota</taxon>
        <taxon>Pokkesviricetes</taxon>
        <taxon>Chitovirales</taxon>
        <taxon>Poxviridae</taxon>
        <taxon>Chordopoxvirinae</taxon>
        <taxon>Orthopoxvirus</taxon>
        <taxon>Vaccinia virus</taxon>
    </lineage>
</organism>
<dbReference type="EMBL" id="AY243312">
    <property type="protein sequence ID" value="AAO89282.1"/>
    <property type="molecule type" value="Genomic_DNA"/>
</dbReference>
<dbReference type="EMBL" id="AY243312">
    <property type="protein sequence ID" value="AAO89495.1"/>
    <property type="molecule type" value="Genomic_DNA"/>
</dbReference>
<dbReference type="RefSeq" id="YP_232885.1">
    <property type="nucleotide sequence ID" value="NC_006998.1"/>
</dbReference>
<dbReference type="RefSeq" id="YP_233098.1">
    <property type="nucleotide sequence ID" value="NC_006998.1"/>
</dbReference>
<dbReference type="DNASU" id="3707613"/>
<dbReference type="DNASU" id="3707618"/>
<dbReference type="GeneID" id="3707613"/>
<dbReference type="GeneID" id="3707618"/>
<dbReference type="KEGG" id="vg:3707613"/>
<dbReference type="KEGG" id="vg:3707618"/>
<dbReference type="Proteomes" id="UP000000344">
    <property type="component" value="Genome"/>
</dbReference>
<gene>
    <name type="ordered locus">VACWR003</name>
</gene>
<gene>
    <name type="ordered locus">VACWR216</name>
</gene>
<sequence>MDSLRPVVVVNWIQINFHIDIVKGITGYGFAFICGRDGVRICSETTRRTDDVSGYSVSYSTFCLGNTCLASG</sequence>
<accession>Q805P9</accession>
<keyword id="KW-1185">Reference proteome</keyword>
<name>VA003_VACCW</name>
<organismHost>
    <name type="scientific">Bos taurus</name>
    <name type="common">Bovine</name>
    <dbReference type="NCBI Taxonomy" id="9913"/>
</organismHost>